<protein>
    <recommendedName>
        <fullName>Enhancer of rudimentary homolog</fullName>
    </recommendedName>
</protein>
<dbReference type="EMBL" id="AJ428470">
    <property type="protein sequence ID" value="CAD21538.1"/>
    <property type="molecule type" value="mRNA"/>
</dbReference>
<dbReference type="SMR" id="P69100"/>
<dbReference type="Gene3D" id="3.30.2260.10">
    <property type="entry name" value="Enhancer of rudimentary"/>
    <property type="match status" value="1"/>
</dbReference>
<dbReference type="InterPro" id="IPR035912">
    <property type="entry name" value="EHR_sf"/>
</dbReference>
<dbReference type="InterPro" id="IPR000781">
    <property type="entry name" value="ERH"/>
</dbReference>
<dbReference type="PANTHER" id="PTHR12373">
    <property type="entry name" value="ENHANCER OF RUDIMENTARY ERH"/>
    <property type="match status" value="1"/>
</dbReference>
<dbReference type="PANTHER" id="PTHR12373:SF0">
    <property type="entry name" value="ENHANCER OF RUDIMENTARY HOMOLOG"/>
    <property type="match status" value="1"/>
</dbReference>
<dbReference type="Pfam" id="PF01133">
    <property type="entry name" value="ER"/>
    <property type="match status" value="1"/>
</dbReference>
<dbReference type="PIRSF" id="PIRSF016393">
    <property type="entry name" value="Enh_rudimentary"/>
    <property type="match status" value="1"/>
</dbReference>
<dbReference type="SUPFAM" id="SSF143875">
    <property type="entry name" value="ERH-like"/>
    <property type="match status" value="1"/>
</dbReference>
<dbReference type="PROSITE" id="PS01290">
    <property type="entry name" value="ER"/>
    <property type="match status" value="1"/>
</dbReference>
<sequence length="102" mass="11827">MSHTILLVQQQVKKPESRVWADYETLNQCLEGVCKIYEEQLKQQNPTAPTITYDISQLFKFIDQLADLSCLEFHPATGTYVPHTKDWIKENIYALLRNQAGQ</sequence>
<accession>P69100</accession>
<accession>Q9GP36</accession>
<gene>
    <name type="primary">ERH</name>
</gene>
<organism>
    <name type="scientific">Taenia solium</name>
    <name type="common">Pork tapeworm</name>
    <dbReference type="NCBI Taxonomy" id="6204"/>
    <lineage>
        <taxon>Eukaryota</taxon>
        <taxon>Metazoa</taxon>
        <taxon>Spiralia</taxon>
        <taxon>Lophotrochozoa</taxon>
        <taxon>Platyhelminthes</taxon>
        <taxon>Cestoda</taxon>
        <taxon>Eucestoda</taxon>
        <taxon>Cyclophyllidea</taxon>
        <taxon>Taeniidae</taxon>
        <taxon>Taenia</taxon>
    </lineage>
</organism>
<name>ERH_TAESO</name>
<comment type="function">
    <text evidence="1">May have a role in the cell cycle.</text>
</comment>
<comment type="subunit">
    <text evidence="1">Homodimer.</text>
</comment>
<comment type="similarity">
    <text evidence="2">Belongs to the E(R) family.</text>
</comment>
<evidence type="ECO:0000250" key="1"/>
<evidence type="ECO:0000305" key="2"/>
<reference key="1">
    <citation type="journal article" date="2002" name="Mol. Biochem. Parasitol.">
        <title>Characterization of a spliced leader gene and of trans-spliced mRNAs from Taenia solium.</title>
        <authorList>
            <person name="Brehm K."/>
            <person name="Hubert K."/>
            <person name="Sciutto E."/>
            <person name="Garate T."/>
            <person name="Frosch M."/>
        </authorList>
    </citation>
    <scope>NUCLEOTIDE SEQUENCE [MRNA]</scope>
</reference>
<keyword id="KW-0131">Cell cycle</keyword>
<feature type="chain" id="PRO_0000219356" description="Enhancer of rudimentary homolog">
    <location>
        <begin position="1"/>
        <end position="102"/>
    </location>
</feature>
<proteinExistence type="inferred from homology"/>